<name>RUVA_CAUVN</name>
<organism>
    <name type="scientific">Caulobacter vibrioides (strain NA1000 / CB15N)</name>
    <name type="common">Caulobacter crescentus</name>
    <dbReference type="NCBI Taxonomy" id="565050"/>
    <lineage>
        <taxon>Bacteria</taxon>
        <taxon>Pseudomonadati</taxon>
        <taxon>Pseudomonadota</taxon>
        <taxon>Alphaproteobacteria</taxon>
        <taxon>Caulobacterales</taxon>
        <taxon>Caulobacteraceae</taxon>
        <taxon>Caulobacter</taxon>
    </lineage>
</organism>
<feature type="chain" id="PRO_1000195126" description="Holliday junction branch migration complex subunit RuvA">
    <location>
        <begin position="1"/>
        <end position="205"/>
    </location>
</feature>
<feature type="region of interest" description="Domain I" evidence="1">
    <location>
        <begin position="1"/>
        <end position="65"/>
    </location>
</feature>
<feature type="region of interest" description="Domain II" evidence="1">
    <location>
        <begin position="66"/>
        <end position="144"/>
    </location>
</feature>
<feature type="region of interest" description="Flexible linker" evidence="1">
    <location>
        <begin position="145"/>
        <end position="153"/>
    </location>
</feature>
<feature type="region of interest" description="Domain III" evidence="1">
    <location>
        <begin position="153"/>
        <end position="205"/>
    </location>
</feature>
<evidence type="ECO:0000255" key="1">
    <source>
        <dbReference type="HAMAP-Rule" id="MF_00031"/>
    </source>
</evidence>
<protein>
    <recommendedName>
        <fullName evidence="1">Holliday junction branch migration complex subunit RuvA</fullName>
    </recommendedName>
</protein>
<reference key="1">
    <citation type="journal article" date="2010" name="J. Bacteriol.">
        <title>The genetic basis of laboratory adaptation in Caulobacter crescentus.</title>
        <authorList>
            <person name="Marks M.E."/>
            <person name="Castro-Rojas C.M."/>
            <person name="Teiling C."/>
            <person name="Du L."/>
            <person name="Kapatral V."/>
            <person name="Walunas T.L."/>
            <person name="Crosson S."/>
        </authorList>
    </citation>
    <scope>NUCLEOTIDE SEQUENCE [LARGE SCALE GENOMIC DNA]</scope>
    <source>
        <strain>NA1000 / CB15N</strain>
    </source>
</reference>
<comment type="function">
    <text evidence="1">The RuvA-RuvB-RuvC complex processes Holliday junction (HJ) DNA during genetic recombination and DNA repair, while the RuvA-RuvB complex plays an important role in the rescue of blocked DNA replication forks via replication fork reversal (RFR). RuvA specifically binds to HJ cruciform DNA, conferring on it an open structure. The RuvB hexamer acts as an ATP-dependent pump, pulling dsDNA into and through the RuvAB complex. HJ branch migration allows RuvC to scan DNA until it finds its consensus sequence, where it cleaves and resolves the cruciform DNA.</text>
</comment>
<comment type="subunit">
    <text evidence="1">Homotetramer. Forms an RuvA(8)-RuvB(12)-Holliday junction (HJ) complex. HJ DNA is sandwiched between 2 RuvA tetramers; dsDNA enters through RuvA and exits via RuvB. An RuvB hexamer assembles on each DNA strand where it exits the tetramer. Each RuvB hexamer is contacted by two RuvA subunits (via domain III) on 2 adjacent RuvB subunits; this complex drives branch migration. In the full resolvosome a probable DNA-RuvA(4)-RuvB(12)-RuvC(2) complex forms which resolves the HJ.</text>
</comment>
<comment type="subcellular location">
    <subcellularLocation>
        <location evidence="1">Cytoplasm</location>
    </subcellularLocation>
</comment>
<comment type="domain">
    <text evidence="1">Has three domains with a flexible linker between the domains II and III and assumes an 'L' shape. Domain III is highly mobile and contacts RuvB.</text>
</comment>
<comment type="similarity">
    <text evidence="1">Belongs to the RuvA family.</text>
</comment>
<proteinExistence type="inferred from homology"/>
<accession>B8H455</accession>
<gene>
    <name evidence="1" type="primary">ruvA</name>
    <name type="ordered locus">CCNA_03345</name>
</gene>
<keyword id="KW-0963">Cytoplasm</keyword>
<keyword id="KW-0227">DNA damage</keyword>
<keyword id="KW-0233">DNA recombination</keyword>
<keyword id="KW-0234">DNA repair</keyword>
<keyword id="KW-0238">DNA-binding</keyword>
<keyword id="KW-1185">Reference proteome</keyword>
<sequence>MIGRLRGAVAEVGEEEALIDVMGVGYLVRCGHRTLQRLPALGEETLLHIESQWSESAGLRLYGFLTREDRRAFVLLQAIQGVGPKAAMAVLDVLSPAELASAVAREDKAAVGRANGVGPKLALRIVTELKDKPITDGPVLMSAPTSSAPSAPAKPAPTGDAVAALMGLGVAEVNARRVVEAAAAELGEEATVQALIKAGLKELGR</sequence>
<dbReference type="EMBL" id="CP001340">
    <property type="protein sequence ID" value="ACL96809.1"/>
    <property type="molecule type" value="Genomic_DNA"/>
</dbReference>
<dbReference type="RefSeq" id="WP_010921070.1">
    <property type="nucleotide sequence ID" value="NC_011916.1"/>
</dbReference>
<dbReference type="RefSeq" id="YP_002518717.1">
    <property type="nucleotide sequence ID" value="NC_011916.1"/>
</dbReference>
<dbReference type="SMR" id="B8H455"/>
<dbReference type="GeneID" id="7330369"/>
<dbReference type="KEGG" id="ccs:CCNA_03345"/>
<dbReference type="PATRIC" id="fig|565050.3.peg.3260"/>
<dbReference type="HOGENOM" id="CLU_087936_3_0_5"/>
<dbReference type="OrthoDB" id="5293449at2"/>
<dbReference type="PhylomeDB" id="B8H455"/>
<dbReference type="Proteomes" id="UP000001364">
    <property type="component" value="Chromosome"/>
</dbReference>
<dbReference type="GO" id="GO:0005737">
    <property type="term" value="C:cytoplasm"/>
    <property type="evidence" value="ECO:0007669"/>
    <property type="project" value="UniProtKB-SubCell"/>
</dbReference>
<dbReference type="GO" id="GO:0009379">
    <property type="term" value="C:Holliday junction helicase complex"/>
    <property type="evidence" value="ECO:0007669"/>
    <property type="project" value="InterPro"/>
</dbReference>
<dbReference type="GO" id="GO:0048476">
    <property type="term" value="C:Holliday junction resolvase complex"/>
    <property type="evidence" value="ECO:0007669"/>
    <property type="project" value="UniProtKB-UniRule"/>
</dbReference>
<dbReference type="GO" id="GO:0005524">
    <property type="term" value="F:ATP binding"/>
    <property type="evidence" value="ECO:0007669"/>
    <property type="project" value="InterPro"/>
</dbReference>
<dbReference type="GO" id="GO:0000400">
    <property type="term" value="F:four-way junction DNA binding"/>
    <property type="evidence" value="ECO:0007669"/>
    <property type="project" value="UniProtKB-UniRule"/>
</dbReference>
<dbReference type="GO" id="GO:0009378">
    <property type="term" value="F:four-way junction helicase activity"/>
    <property type="evidence" value="ECO:0007669"/>
    <property type="project" value="InterPro"/>
</dbReference>
<dbReference type="GO" id="GO:0006310">
    <property type="term" value="P:DNA recombination"/>
    <property type="evidence" value="ECO:0007669"/>
    <property type="project" value="UniProtKB-UniRule"/>
</dbReference>
<dbReference type="GO" id="GO:0006281">
    <property type="term" value="P:DNA repair"/>
    <property type="evidence" value="ECO:0007669"/>
    <property type="project" value="UniProtKB-UniRule"/>
</dbReference>
<dbReference type="FunFam" id="1.10.8.10:FF:000221">
    <property type="entry name" value="Holliday junction ATP-dependent DNA helicase RuvA"/>
    <property type="match status" value="1"/>
</dbReference>
<dbReference type="Gene3D" id="1.10.150.20">
    <property type="entry name" value="5' to 3' exonuclease, C-terminal subdomain"/>
    <property type="match status" value="1"/>
</dbReference>
<dbReference type="Gene3D" id="1.10.8.10">
    <property type="entry name" value="DNA helicase RuvA subunit, C-terminal domain"/>
    <property type="match status" value="1"/>
</dbReference>
<dbReference type="Gene3D" id="2.40.50.140">
    <property type="entry name" value="Nucleic acid-binding proteins"/>
    <property type="match status" value="1"/>
</dbReference>
<dbReference type="HAMAP" id="MF_00031">
    <property type="entry name" value="DNA_HJ_migration_RuvA"/>
    <property type="match status" value="1"/>
</dbReference>
<dbReference type="InterPro" id="IPR013849">
    <property type="entry name" value="DNA_helicase_Holl-junc_RuvA_I"/>
</dbReference>
<dbReference type="InterPro" id="IPR012340">
    <property type="entry name" value="NA-bd_OB-fold"/>
</dbReference>
<dbReference type="InterPro" id="IPR000085">
    <property type="entry name" value="RuvA"/>
</dbReference>
<dbReference type="InterPro" id="IPR010994">
    <property type="entry name" value="RuvA_2-like"/>
</dbReference>
<dbReference type="InterPro" id="IPR011114">
    <property type="entry name" value="RuvA_C"/>
</dbReference>
<dbReference type="InterPro" id="IPR036267">
    <property type="entry name" value="RuvA_C_sf"/>
</dbReference>
<dbReference type="NCBIfam" id="TIGR00084">
    <property type="entry name" value="ruvA"/>
    <property type="match status" value="1"/>
</dbReference>
<dbReference type="Pfam" id="PF14520">
    <property type="entry name" value="HHH_5"/>
    <property type="match status" value="1"/>
</dbReference>
<dbReference type="Pfam" id="PF07499">
    <property type="entry name" value="RuvA_C"/>
    <property type="match status" value="1"/>
</dbReference>
<dbReference type="Pfam" id="PF01330">
    <property type="entry name" value="RuvA_N"/>
    <property type="match status" value="1"/>
</dbReference>
<dbReference type="SUPFAM" id="SSF46929">
    <property type="entry name" value="DNA helicase RuvA subunit, C-terminal domain"/>
    <property type="match status" value="1"/>
</dbReference>
<dbReference type="SUPFAM" id="SSF50249">
    <property type="entry name" value="Nucleic acid-binding proteins"/>
    <property type="match status" value="1"/>
</dbReference>
<dbReference type="SUPFAM" id="SSF47781">
    <property type="entry name" value="RuvA domain 2-like"/>
    <property type="match status" value="1"/>
</dbReference>